<protein>
    <recommendedName>
        <fullName>U6 snRNA-associated Sm-like protein LSm4</fullName>
    </recommendedName>
</protein>
<gene>
    <name type="primary">LSM4</name>
</gene>
<organism>
    <name type="scientific">Bos taurus</name>
    <name type="common">Bovine</name>
    <dbReference type="NCBI Taxonomy" id="9913"/>
    <lineage>
        <taxon>Eukaryota</taxon>
        <taxon>Metazoa</taxon>
        <taxon>Chordata</taxon>
        <taxon>Craniata</taxon>
        <taxon>Vertebrata</taxon>
        <taxon>Euteleostomi</taxon>
        <taxon>Mammalia</taxon>
        <taxon>Eutheria</taxon>
        <taxon>Laurasiatheria</taxon>
        <taxon>Artiodactyla</taxon>
        <taxon>Ruminantia</taxon>
        <taxon>Pecora</taxon>
        <taxon>Bovidae</taxon>
        <taxon>Bovinae</taxon>
        <taxon>Bos</taxon>
    </lineage>
</organism>
<sequence>MLPLSLLKTAQNHPMLVELKNGETYNGHLVSCDNWMNINLREVICTSRDGDKFWRMPECYIRGSTIKYLRIPDEIIDMVKEEVVAKGRGRGGLQQQKQQKGRGMGGAGRGVFGGRGRGGIPGTGRGQPEKKPGRQAGKQ</sequence>
<proteinExistence type="evidence at transcript level"/>
<keyword id="KW-0007">Acetylation</keyword>
<keyword id="KW-1017">Isopeptide bond</keyword>
<keyword id="KW-0507">mRNA processing</keyword>
<keyword id="KW-0508">mRNA splicing</keyword>
<keyword id="KW-0539">Nucleus</keyword>
<keyword id="KW-1185">Reference proteome</keyword>
<keyword id="KW-0687">Ribonucleoprotein</keyword>
<keyword id="KW-0694">RNA-binding</keyword>
<keyword id="KW-0747">Spliceosome</keyword>
<keyword id="KW-0832">Ubl conjugation</keyword>
<comment type="function">
    <text evidence="1">Plays a role in pre-mRNA splicing as component of the U4/U6-U5 tri-snRNP complex that is involved in spliceosome assembly, and as component of the precatalytic spliceosome (spliceosome B complex). The heptameric LSM2-8 complex binds specifically to the 3'-terminal U-tract of U6 snRNA.</text>
</comment>
<comment type="subunit">
    <text evidence="1">Component of the precatalytic spliceosome (spliceosome B complex). Component of the U4/U6-U5 tri-snRNP complex, a building block of the precatalytic spliceosome (spliceosome B complex). The U4/U6-U5 tri-snRNP complex is composed of the U4, U6 and U5 snRNAs and at least PRPF3, PRPF4, PRPF6, PRPF8, PRPF31, SNRNP200, TXNL4A, SNRNP40, SNRPB, SNRPD1, SNRPD2, SNRPD3, SNRPE, SNRPF, SNRPG, DDX23, CD2BP2, PPIH, SNU13, EFTUD2, SART1 and USP39, plus LSM2, LSM3, LSM4, LSM5, LSM6, LSM7 and LSM8. LSM2, LSM3, LSM4, LSM5, LSM6, LSM7 and LSM8 form a heptameric, ring-shaped subcomplex (the LSM2-8 complex) that is part of the U4/U6-U5 tri-snRNP complex and the precatalytic spliceosome.</text>
</comment>
<comment type="subcellular location">
    <subcellularLocation>
        <location evidence="1">Nucleus</location>
    </subcellularLocation>
</comment>
<comment type="similarity">
    <text evidence="4">Belongs to the snRNP Sm proteins family.</text>
</comment>
<evidence type="ECO:0000250" key="1">
    <source>
        <dbReference type="UniProtKB" id="Q9Y4Z0"/>
    </source>
</evidence>
<evidence type="ECO:0000255" key="2">
    <source>
        <dbReference type="PROSITE-ProRule" id="PRU01346"/>
    </source>
</evidence>
<evidence type="ECO:0000256" key="3">
    <source>
        <dbReference type="SAM" id="MobiDB-lite"/>
    </source>
</evidence>
<evidence type="ECO:0000305" key="4"/>
<reference key="1">
    <citation type="submission" date="2005-08" db="EMBL/GenBank/DDBJ databases">
        <authorList>
            <consortium name="NIH - Mammalian Gene Collection (MGC) project"/>
        </authorList>
    </citation>
    <scope>NUCLEOTIDE SEQUENCE [LARGE SCALE MRNA]</scope>
    <source>
        <strain>Hereford</strain>
        <tissue>Thymus</tissue>
    </source>
</reference>
<feature type="chain" id="PRO_0000244620" description="U6 snRNA-associated Sm-like protein LSm4">
    <location>
        <begin position="1"/>
        <end position="139"/>
    </location>
</feature>
<feature type="domain" description="Sm" evidence="2">
    <location>
        <begin position="2"/>
        <end position="75"/>
    </location>
</feature>
<feature type="region of interest" description="Disordered" evidence="3">
    <location>
        <begin position="87"/>
        <end position="139"/>
    </location>
</feature>
<feature type="compositionally biased region" description="Gly residues" evidence="3">
    <location>
        <begin position="102"/>
        <end position="125"/>
    </location>
</feature>
<feature type="modified residue" description="N-acetylmethionine" evidence="1">
    <location>
        <position position="1"/>
    </location>
</feature>
<feature type="cross-link" description="Glycyl lysine isopeptide (Lys-Gly) (interchain with G-Cter in SUMO2)" evidence="1">
    <location>
        <position position="80"/>
    </location>
</feature>
<accession>Q3ZBK6</accession>
<name>LSM4_BOVIN</name>
<dbReference type="EMBL" id="BC103243">
    <property type="protein sequence ID" value="AAI03244.1"/>
    <property type="molecule type" value="mRNA"/>
</dbReference>
<dbReference type="RefSeq" id="NP_001030513.1">
    <property type="nucleotide sequence ID" value="NM_001035436.2"/>
</dbReference>
<dbReference type="SMR" id="Q3ZBK6"/>
<dbReference type="FunCoup" id="Q3ZBK6">
    <property type="interactions" value="2739"/>
</dbReference>
<dbReference type="STRING" id="9913.ENSBTAP00000011312"/>
<dbReference type="PaxDb" id="9913-ENSBTAP00000011312"/>
<dbReference type="PeptideAtlas" id="Q3ZBK6"/>
<dbReference type="Ensembl" id="ENSBTAT00000110193.1">
    <property type="protein sequence ID" value="ENSBTAP00000100020.1"/>
    <property type="gene ID" value="ENSBTAG00000008578.7"/>
</dbReference>
<dbReference type="GeneID" id="613634"/>
<dbReference type="KEGG" id="bta:613634"/>
<dbReference type="CTD" id="25804"/>
<dbReference type="VEuPathDB" id="HostDB:ENSBTAG00000008578"/>
<dbReference type="VGNC" id="VGNC:31056">
    <property type="gene designation" value="LSM4"/>
</dbReference>
<dbReference type="eggNOG" id="KOG3293">
    <property type="taxonomic scope" value="Eukaryota"/>
</dbReference>
<dbReference type="GeneTree" id="ENSGT00610000086173"/>
<dbReference type="HOGENOM" id="CLU_099537_2_1_1"/>
<dbReference type="InParanoid" id="Q3ZBK6"/>
<dbReference type="OMA" id="RGAFGNR"/>
<dbReference type="OrthoDB" id="747253at2759"/>
<dbReference type="TreeFam" id="TF315027"/>
<dbReference type="Reactome" id="R-BTA-430039">
    <property type="pathway name" value="mRNA decay by 5' to 3' exoribonuclease"/>
</dbReference>
<dbReference type="Reactome" id="R-BTA-72163">
    <property type="pathway name" value="mRNA Splicing - Major Pathway"/>
</dbReference>
<dbReference type="Proteomes" id="UP000009136">
    <property type="component" value="Chromosome 7"/>
</dbReference>
<dbReference type="Bgee" id="ENSBTAG00000008578">
    <property type="expression patterns" value="Expressed in ileocecal valve and 106 other cell types or tissues"/>
</dbReference>
<dbReference type="GO" id="GO:0005829">
    <property type="term" value="C:cytosol"/>
    <property type="evidence" value="ECO:0007669"/>
    <property type="project" value="Ensembl"/>
</dbReference>
<dbReference type="GO" id="GO:0120115">
    <property type="term" value="C:Lsm2-8 complex"/>
    <property type="evidence" value="ECO:0007669"/>
    <property type="project" value="Ensembl"/>
</dbReference>
<dbReference type="GO" id="GO:0016020">
    <property type="term" value="C:membrane"/>
    <property type="evidence" value="ECO:0007669"/>
    <property type="project" value="Ensembl"/>
</dbReference>
<dbReference type="GO" id="GO:0005634">
    <property type="term" value="C:nucleus"/>
    <property type="evidence" value="ECO:0000250"/>
    <property type="project" value="UniProtKB"/>
</dbReference>
<dbReference type="GO" id="GO:0000932">
    <property type="term" value="C:P-body"/>
    <property type="evidence" value="ECO:0000318"/>
    <property type="project" value="GO_Central"/>
</dbReference>
<dbReference type="GO" id="GO:0097526">
    <property type="term" value="C:spliceosomal tri-snRNP complex"/>
    <property type="evidence" value="ECO:0000318"/>
    <property type="project" value="GO_Central"/>
</dbReference>
<dbReference type="GO" id="GO:0071005">
    <property type="term" value="C:U2-type precatalytic spliceosome"/>
    <property type="evidence" value="ECO:0000250"/>
    <property type="project" value="UniProtKB"/>
</dbReference>
<dbReference type="GO" id="GO:0046540">
    <property type="term" value="C:U4/U6 x U5 tri-snRNP complex"/>
    <property type="evidence" value="ECO:0000250"/>
    <property type="project" value="UniProtKB"/>
</dbReference>
<dbReference type="GO" id="GO:0005688">
    <property type="term" value="C:U6 snRNP"/>
    <property type="evidence" value="ECO:0000318"/>
    <property type="project" value="GO_Central"/>
</dbReference>
<dbReference type="GO" id="GO:0042731">
    <property type="term" value="F:PH domain binding"/>
    <property type="evidence" value="ECO:0007669"/>
    <property type="project" value="Ensembl"/>
</dbReference>
<dbReference type="GO" id="GO:0017070">
    <property type="term" value="F:U6 snRNA binding"/>
    <property type="evidence" value="ECO:0000318"/>
    <property type="project" value="GO_Central"/>
</dbReference>
<dbReference type="GO" id="GO:0000398">
    <property type="term" value="P:mRNA splicing, via spliceosome"/>
    <property type="evidence" value="ECO:0000250"/>
    <property type="project" value="UniProtKB"/>
</dbReference>
<dbReference type="GO" id="GO:0000956">
    <property type="term" value="P:nuclear-transcribed mRNA catabolic process"/>
    <property type="evidence" value="ECO:0007669"/>
    <property type="project" value="InterPro"/>
</dbReference>
<dbReference type="GO" id="GO:0033962">
    <property type="term" value="P:P-body assembly"/>
    <property type="evidence" value="ECO:0000318"/>
    <property type="project" value="GO_Central"/>
</dbReference>
<dbReference type="GO" id="GO:0000387">
    <property type="term" value="P:spliceosomal snRNP assembly"/>
    <property type="evidence" value="ECO:0000318"/>
    <property type="project" value="GO_Central"/>
</dbReference>
<dbReference type="CDD" id="cd01723">
    <property type="entry name" value="LSm4"/>
    <property type="match status" value="1"/>
</dbReference>
<dbReference type="FunFam" id="2.30.30.100:FF:000005">
    <property type="entry name" value="U6 snRNA-associated Sm-like protein LSm4"/>
    <property type="match status" value="1"/>
</dbReference>
<dbReference type="Gene3D" id="2.30.30.100">
    <property type="match status" value="1"/>
</dbReference>
<dbReference type="InterPro" id="IPR034101">
    <property type="entry name" value="Lsm4"/>
</dbReference>
<dbReference type="InterPro" id="IPR027141">
    <property type="entry name" value="LSm4/Sm_D1/D3"/>
</dbReference>
<dbReference type="InterPro" id="IPR010920">
    <property type="entry name" value="LSM_dom_sf"/>
</dbReference>
<dbReference type="InterPro" id="IPR047575">
    <property type="entry name" value="Sm"/>
</dbReference>
<dbReference type="InterPro" id="IPR001163">
    <property type="entry name" value="Sm_dom_euk/arc"/>
</dbReference>
<dbReference type="PANTHER" id="PTHR23338">
    <property type="entry name" value="SMALL NUCLEAR RIBONUCLEOPROTEIN SM"/>
    <property type="match status" value="1"/>
</dbReference>
<dbReference type="Pfam" id="PF01423">
    <property type="entry name" value="LSM"/>
    <property type="match status" value="1"/>
</dbReference>
<dbReference type="SMART" id="SM00651">
    <property type="entry name" value="Sm"/>
    <property type="match status" value="1"/>
</dbReference>
<dbReference type="SUPFAM" id="SSF50182">
    <property type="entry name" value="Sm-like ribonucleoproteins"/>
    <property type="match status" value="1"/>
</dbReference>
<dbReference type="PROSITE" id="PS52002">
    <property type="entry name" value="SM"/>
    <property type="match status" value="1"/>
</dbReference>